<proteinExistence type="evidence at protein level"/>
<name>PSBH_THAPS</name>
<accession>A0T0P8</accession>
<sequence length="66" mass="7388">MALRTRLGEILRPLNAEYGKVVPGWGTTPIMGLTMVLFLVFLLIILQIYNSSLIIENVDVDWANAI</sequence>
<comment type="function">
    <text evidence="1">One of the components of the core complex of photosystem II (PSII), required for its stability and/or assembly. PSII is a light-driven water:plastoquinone oxidoreductase that uses light energy to abstract electrons from H(2)O, generating O(2) and a proton gradient subsequently used for ATP formation. It consists of a core antenna complex that captures photons, and an electron transfer chain that converts photonic excitation into a charge separation.</text>
</comment>
<comment type="subunit">
    <text evidence="1">PSII is composed of 1 copy each of membrane proteins PsbA, PsbB, PsbC, PsbD, PsbE, PsbF, PsbH, PsbI, PsbJ, PsbK, PsbL, PsbM, PsbT, PsbX, PsbY, PsbZ, Psb30/Ycf12, at least 3 peripheral proteins of the oxygen-evolving complex and a large number of cofactors. It forms dimeric complexes.</text>
</comment>
<comment type="subcellular location">
    <subcellularLocation>
        <location evidence="1">Plastid</location>
        <location evidence="1">Chloroplast thylakoid membrane</location>
        <topology evidence="1">Single-pass membrane protein</topology>
    </subcellularLocation>
</comment>
<comment type="similarity">
    <text evidence="1">Belongs to the PsbH family.</text>
</comment>
<gene>
    <name evidence="1" type="primary">psbH</name>
</gene>
<evidence type="ECO:0000255" key="1">
    <source>
        <dbReference type="HAMAP-Rule" id="MF_00752"/>
    </source>
</evidence>
<evidence type="ECO:0007829" key="2">
    <source>
        <dbReference type="PDB" id="8IWH"/>
    </source>
</evidence>
<keyword id="KW-0002">3D-structure</keyword>
<keyword id="KW-0150">Chloroplast</keyword>
<keyword id="KW-0472">Membrane</keyword>
<keyword id="KW-0602">Photosynthesis</keyword>
<keyword id="KW-0604">Photosystem II</keyword>
<keyword id="KW-0934">Plastid</keyword>
<keyword id="KW-0793">Thylakoid</keyword>
<keyword id="KW-0812">Transmembrane</keyword>
<keyword id="KW-1133">Transmembrane helix</keyword>
<geneLocation type="chloroplast"/>
<dbReference type="EMBL" id="EF067921">
    <property type="protein sequence ID" value="ABK20733.1"/>
    <property type="molecule type" value="Genomic_DNA"/>
</dbReference>
<dbReference type="RefSeq" id="YP_874510.1">
    <property type="nucleotide sequence ID" value="NC_008589.1"/>
</dbReference>
<dbReference type="PDB" id="8IWH">
    <property type="method" value="EM"/>
    <property type="resolution" value="2.68 A"/>
    <property type="chains" value="H/h=1-66"/>
</dbReference>
<dbReference type="PDBsum" id="8IWH"/>
<dbReference type="EMDB" id="EMD-35766"/>
<dbReference type="SMR" id="A0T0P8"/>
<dbReference type="STRING" id="35128.A0T0P8"/>
<dbReference type="PaxDb" id="35128-Thapsdraft1313"/>
<dbReference type="GeneID" id="4524849"/>
<dbReference type="eggNOG" id="ENOG502S8Y7">
    <property type="taxonomic scope" value="Eukaryota"/>
</dbReference>
<dbReference type="InParanoid" id="A0T0P8"/>
<dbReference type="OMA" id="RTWLGDI"/>
<dbReference type="GO" id="GO:0009535">
    <property type="term" value="C:chloroplast thylakoid membrane"/>
    <property type="evidence" value="ECO:0007669"/>
    <property type="project" value="UniProtKB-SubCell"/>
</dbReference>
<dbReference type="GO" id="GO:0009523">
    <property type="term" value="C:photosystem II"/>
    <property type="evidence" value="ECO:0007669"/>
    <property type="project" value="UniProtKB-KW"/>
</dbReference>
<dbReference type="GO" id="GO:0042301">
    <property type="term" value="F:phosphate ion binding"/>
    <property type="evidence" value="ECO:0007669"/>
    <property type="project" value="InterPro"/>
</dbReference>
<dbReference type="GO" id="GO:0015979">
    <property type="term" value="P:photosynthesis"/>
    <property type="evidence" value="ECO:0007669"/>
    <property type="project" value="UniProtKB-UniRule"/>
</dbReference>
<dbReference type="GO" id="GO:0050821">
    <property type="term" value="P:protein stabilization"/>
    <property type="evidence" value="ECO:0007669"/>
    <property type="project" value="InterPro"/>
</dbReference>
<dbReference type="Gene3D" id="1.20.5.880">
    <property type="entry name" value="Photosystem II reaction center protein H"/>
    <property type="match status" value="1"/>
</dbReference>
<dbReference type="HAMAP" id="MF_00752">
    <property type="entry name" value="PSII_PsbH"/>
    <property type="match status" value="1"/>
</dbReference>
<dbReference type="InterPro" id="IPR001056">
    <property type="entry name" value="PSII_PsbH"/>
</dbReference>
<dbReference type="InterPro" id="IPR036863">
    <property type="entry name" value="PSII_PsbH_sf"/>
</dbReference>
<dbReference type="NCBIfam" id="NF002728">
    <property type="entry name" value="PRK02624.1"/>
    <property type="match status" value="1"/>
</dbReference>
<dbReference type="PANTHER" id="PTHR34469">
    <property type="entry name" value="PHOTOSYSTEM II REACTION CENTER PROTEIN H"/>
    <property type="match status" value="1"/>
</dbReference>
<dbReference type="PANTHER" id="PTHR34469:SF4">
    <property type="entry name" value="PHOTOSYSTEM II REACTION CENTER PROTEIN H"/>
    <property type="match status" value="1"/>
</dbReference>
<dbReference type="Pfam" id="PF00737">
    <property type="entry name" value="PsbH"/>
    <property type="match status" value="1"/>
</dbReference>
<dbReference type="SUPFAM" id="SSF161025">
    <property type="entry name" value="Photosystem II 10 kDa phosphoprotein PsbH"/>
    <property type="match status" value="1"/>
</dbReference>
<reference key="1">
    <citation type="journal article" date="2007" name="Mol. Genet. Genomics">
        <title>Chloroplast genomes of the diatoms Phaeodactylum tricornutum and Thalassiosira pseudonana: comparison with other plastid genomes of the red lineage.</title>
        <authorList>
            <person name="Oudot-Le Secq M.-P."/>
            <person name="Grimwood J."/>
            <person name="Shapiro H."/>
            <person name="Armbrust E.V."/>
            <person name="Bowler C."/>
            <person name="Green B.R."/>
        </authorList>
    </citation>
    <scope>NUCLEOTIDE SEQUENCE [LARGE SCALE GENOMIC DNA]</scope>
    <source>
        <strain>CCMP1335 / NEPCC58 / CCAP 1085/12</strain>
    </source>
</reference>
<feature type="chain" id="PRO_0000275782" description="Photosystem II reaction center protein H">
    <location>
        <begin position="1"/>
        <end position="66"/>
    </location>
</feature>
<feature type="transmembrane region" description="Helical" evidence="1">
    <location>
        <begin position="29"/>
        <end position="49"/>
    </location>
</feature>
<feature type="helix" evidence="2">
    <location>
        <begin position="6"/>
        <end position="11"/>
    </location>
</feature>
<feature type="helix" evidence="2">
    <location>
        <begin position="12"/>
        <end position="14"/>
    </location>
</feature>
<feature type="strand" evidence="2">
    <location>
        <begin position="22"/>
        <end position="24"/>
    </location>
</feature>
<feature type="helix" evidence="2">
    <location>
        <begin position="28"/>
        <end position="49"/>
    </location>
</feature>
<protein>
    <recommendedName>
        <fullName evidence="1">Photosystem II reaction center protein H</fullName>
        <shortName evidence="1">PSII-H</shortName>
    </recommendedName>
</protein>
<organism>
    <name type="scientific">Thalassiosira pseudonana</name>
    <name type="common">Marine diatom</name>
    <name type="synonym">Cyclotella nana</name>
    <dbReference type="NCBI Taxonomy" id="35128"/>
    <lineage>
        <taxon>Eukaryota</taxon>
        <taxon>Sar</taxon>
        <taxon>Stramenopiles</taxon>
        <taxon>Ochrophyta</taxon>
        <taxon>Bacillariophyta</taxon>
        <taxon>Coscinodiscophyceae</taxon>
        <taxon>Thalassiosirophycidae</taxon>
        <taxon>Thalassiosirales</taxon>
        <taxon>Thalassiosiraceae</taxon>
        <taxon>Thalassiosira</taxon>
    </lineage>
</organism>